<accession>A4WJ29</accession>
<comment type="similarity">
    <text evidence="1">Belongs to the UPF0173 family.</text>
</comment>
<gene>
    <name type="ordered locus">Pars_0810</name>
</gene>
<evidence type="ECO:0000255" key="1">
    <source>
        <dbReference type="HAMAP-Rule" id="MF_00457"/>
    </source>
</evidence>
<protein>
    <recommendedName>
        <fullName evidence="1">UPF0173 metal-dependent hydrolase Pars_0810</fullName>
    </recommendedName>
</protein>
<dbReference type="EMBL" id="CP000660">
    <property type="protein sequence ID" value="ABP50396.1"/>
    <property type="molecule type" value="Genomic_DNA"/>
</dbReference>
<dbReference type="RefSeq" id="WP_011900303.1">
    <property type="nucleotide sequence ID" value="NC_009376.1"/>
</dbReference>
<dbReference type="SMR" id="A4WJ29"/>
<dbReference type="STRING" id="340102.Pars_0810"/>
<dbReference type="GeneID" id="5055315"/>
<dbReference type="KEGG" id="pas:Pars_0810"/>
<dbReference type="HOGENOM" id="CLU_070010_4_0_2"/>
<dbReference type="OrthoDB" id="28313at2157"/>
<dbReference type="PhylomeDB" id="A4WJ29"/>
<dbReference type="Proteomes" id="UP000001567">
    <property type="component" value="Chromosome"/>
</dbReference>
<dbReference type="GO" id="GO:0016787">
    <property type="term" value="F:hydrolase activity"/>
    <property type="evidence" value="ECO:0007669"/>
    <property type="project" value="UniProtKB-UniRule"/>
</dbReference>
<dbReference type="Gene3D" id="3.60.15.10">
    <property type="entry name" value="Ribonuclease Z/Hydroxyacylglutathione hydrolase-like"/>
    <property type="match status" value="1"/>
</dbReference>
<dbReference type="HAMAP" id="MF_00457">
    <property type="entry name" value="UPF0173"/>
    <property type="match status" value="1"/>
</dbReference>
<dbReference type="InterPro" id="IPR001279">
    <property type="entry name" value="Metallo-B-lactamas"/>
</dbReference>
<dbReference type="InterPro" id="IPR036866">
    <property type="entry name" value="RibonucZ/Hydroxyglut_hydro"/>
</dbReference>
<dbReference type="InterPro" id="IPR022877">
    <property type="entry name" value="UPF0173"/>
</dbReference>
<dbReference type="InterPro" id="IPR050114">
    <property type="entry name" value="UPF0173_UPF0282_UlaG_hydrolase"/>
</dbReference>
<dbReference type="NCBIfam" id="NF001911">
    <property type="entry name" value="PRK00685.1"/>
    <property type="match status" value="1"/>
</dbReference>
<dbReference type="PANTHER" id="PTHR43546:SF3">
    <property type="entry name" value="UPF0173 METAL-DEPENDENT HYDROLASE MJ1163"/>
    <property type="match status" value="1"/>
</dbReference>
<dbReference type="PANTHER" id="PTHR43546">
    <property type="entry name" value="UPF0173 METAL-DEPENDENT HYDROLASE MJ1163-RELATED"/>
    <property type="match status" value="1"/>
</dbReference>
<dbReference type="Pfam" id="PF12706">
    <property type="entry name" value="Lactamase_B_2"/>
    <property type="match status" value="1"/>
</dbReference>
<dbReference type="SMART" id="SM00849">
    <property type="entry name" value="Lactamase_B"/>
    <property type="match status" value="1"/>
</dbReference>
<dbReference type="SUPFAM" id="SSF56281">
    <property type="entry name" value="Metallo-hydrolase/oxidoreductase"/>
    <property type="match status" value="1"/>
</dbReference>
<organism>
    <name type="scientific">Pyrobaculum arsenaticum (strain DSM 13514 / JCM 11321 / PZ6)</name>
    <dbReference type="NCBI Taxonomy" id="340102"/>
    <lineage>
        <taxon>Archaea</taxon>
        <taxon>Thermoproteota</taxon>
        <taxon>Thermoprotei</taxon>
        <taxon>Thermoproteales</taxon>
        <taxon>Thermoproteaceae</taxon>
        <taxon>Pyrobaculum</taxon>
    </lineage>
</organism>
<sequence length="225" mass="24506">MQIRWYGHAAFMVETGGAKLLIDPWITNPLSPASPQEVINAKPTHILITHDHFDHLGESVDIAKATGAPIVGSFELMLEVAEKGIPEAQTMPMNIGGTIKLGDGVEVYMTPALHTANRGAPSGFVVATPEGTVYHAGDTALFRDMELIGELYDIDVALLPIGSVYTMGPREAAIAVQLLRPRRVVPMHYNTFPLIRQDPEDFKARVEAVSRAKVFVMKPGDVLKL</sequence>
<name>Y810_PYRAR</name>
<feature type="chain" id="PRO_1000013507" description="UPF0173 metal-dependent hydrolase Pars_0810">
    <location>
        <begin position="1"/>
        <end position="225"/>
    </location>
</feature>
<keyword id="KW-0378">Hydrolase</keyword>
<reference key="1">
    <citation type="submission" date="2007-04" db="EMBL/GenBank/DDBJ databases">
        <title>Complete sequence of Pyrobaculum arsenaticum DSM 13514.</title>
        <authorList>
            <consortium name="US DOE Joint Genome Institute"/>
            <person name="Copeland A."/>
            <person name="Lucas S."/>
            <person name="Lapidus A."/>
            <person name="Barry K."/>
            <person name="Glavina del Rio T."/>
            <person name="Dalin E."/>
            <person name="Tice H."/>
            <person name="Pitluck S."/>
            <person name="Chain P."/>
            <person name="Malfatti S."/>
            <person name="Shin M."/>
            <person name="Vergez L."/>
            <person name="Schmutz J."/>
            <person name="Larimer F."/>
            <person name="Land M."/>
            <person name="Hauser L."/>
            <person name="Kyrpides N."/>
            <person name="Mikhailova N."/>
            <person name="Cozen A.E."/>
            <person name="Fitz-Gibbon S.T."/>
            <person name="House C.H."/>
            <person name="Saltikov C."/>
            <person name="Lowe T.M."/>
            <person name="Richardson P."/>
        </authorList>
    </citation>
    <scope>NUCLEOTIDE SEQUENCE [LARGE SCALE GENOMIC DNA]</scope>
    <source>
        <strain>ATCC 700994 / DSM 13514 / JCM 11321 / PZ6</strain>
    </source>
</reference>
<proteinExistence type="inferred from homology"/>